<proteinExistence type="inferred from homology"/>
<organism>
    <name type="scientific">Cupriavidus pinatubonensis (strain JMP 134 / LMG 1197)</name>
    <name type="common">Cupriavidus necator (strain JMP 134)</name>
    <dbReference type="NCBI Taxonomy" id="264198"/>
    <lineage>
        <taxon>Bacteria</taxon>
        <taxon>Pseudomonadati</taxon>
        <taxon>Pseudomonadota</taxon>
        <taxon>Betaproteobacteria</taxon>
        <taxon>Burkholderiales</taxon>
        <taxon>Burkholderiaceae</taxon>
        <taxon>Cupriavidus</taxon>
    </lineage>
</organism>
<comment type="catalytic activity">
    <reaction evidence="1">
        <text>tRNA(Leu) + L-leucine + ATP = L-leucyl-tRNA(Leu) + AMP + diphosphate</text>
        <dbReference type="Rhea" id="RHEA:11688"/>
        <dbReference type="Rhea" id="RHEA-COMP:9613"/>
        <dbReference type="Rhea" id="RHEA-COMP:9622"/>
        <dbReference type="ChEBI" id="CHEBI:30616"/>
        <dbReference type="ChEBI" id="CHEBI:33019"/>
        <dbReference type="ChEBI" id="CHEBI:57427"/>
        <dbReference type="ChEBI" id="CHEBI:78442"/>
        <dbReference type="ChEBI" id="CHEBI:78494"/>
        <dbReference type="ChEBI" id="CHEBI:456215"/>
        <dbReference type="EC" id="6.1.1.4"/>
    </reaction>
</comment>
<comment type="subcellular location">
    <subcellularLocation>
        <location evidence="1">Cytoplasm</location>
    </subcellularLocation>
</comment>
<comment type="similarity">
    <text evidence="1">Belongs to the class-I aminoacyl-tRNA synthetase family.</text>
</comment>
<comment type="sequence caution" evidence="2">
    <conflict type="erroneous initiation">
        <sequence resource="EMBL-CDS" id="AAZ62195"/>
    </conflict>
</comment>
<gene>
    <name evidence="1" type="primary">leuS</name>
    <name type="ordered locus">Reut_A2834</name>
</gene>
<keyword id="KW-0030">Aminoacyl-tRNA synthetase</keyword>
<keyword id="KW-0067">ATP-binding</keyword>
<keyword id="KW-0963">Cytoplasm</keyword>
<keyword id="KW-0436">Ligase</keyword>
<keyword id="KW-0547">Nucleotide-binding</keyword>
<keyword id="KW-0648">Protein biosynthesis</keyword>
<accession>Q46XD8</accession>
<reference key="1">
    <citation type="journal article" date="2010" name="PLoS ONE">
        <title>The complete multipartite genome sequence of Cupriavidus necator JMP134, a versatile pollutant degrader.</title>
        <authorList>
            <person name="Lykidis A."/>
            <person name="Perez-Pantoja D."/>
            <person name="Ledger T."/>
            <person name="Mavromatis K."/>
            <person name="Anderson I.J."/>
            <person name="Ivanova N.N."/>
            <person name="Hooper S.D."/>
            <person name="Lapidus A."/>
            <person name="Lucas S."/>
            <person name="Gonzalez B."/>
            <person name="Kyrpides N.C."/>
        </authorList>
    </citation>
    <scope>NUCLEOTIDE SEQUENCE [LARGE SCALE GENOMIC DNA]</scope>
    <source>
        <strain>JMP134 / LMG 1197</strain>
    </source>
</reference>
<sequence>MQDKYLPSAVEQAAQQHWQAIDAYRVPEHATGPDGKEKPKFYACSMLPYPSGKLHMGHVRNYTINDVMARYLRMNGNNVLMPMGWDAFGMPAENAALNNGVAPAAWTYDNIAYMKKQMQSMGLAIDWSREVATCSPDYYRWNQWLFLKMLEKGIAYRKTGTVNWDPVDQTVLANEQVIDGRGWRSGAIVEKREIPMYYLRITDYAEELLGDLDGLGWPERVKIMQQNWIGKSVGVRFAFKHDIEGDDGQLINDGKLYVFTTRADTIMGVTFCAVAAEHPLATHAAANNPELAAFIDECKHGSVMEADMATMEKKGMPTGLQVTHPLTGEQVDVWVGNYVLMSYGDGAVMGVPAHDERDFAFANKYKLPIRQVIDVKGQPYSTEAWQEWYGDKENGVCIESGKYNGLGYLAAVEAIAADLGAMGLGEKKITWRLRDWGISRQRYWGTPIPLIHCDSCGVVPVPEQDLPVVLPEDLVPDGTGNPLNKDPRFLQCSCPSCGKPARRETDTMDTFIDSCWYYMRYTCPDAATMVDARNDYWMPMDQYIGGIEHAILHLLYARFWTKVMRDLGLVKFDEPFTNLLTQGMVLNETFYREDAAGKKTWYNPADVDVQTDDRGRPVGATLKADGQPVVIGGVEKMSKSKNNGIDPQALIDQHGADTARLFVMFAAPPEQQLEWSGSGVEGASRFLRRVWNYGFANAAAVRDGAGAAPTADDADLRREIHGVLKQANYDYQRIQYNTVVSATMKMLNALEDAKNASPVARRECFGILLRVLYPVVPHITHGLWDALGYATQYGDLLDAPWPQVDEGALVRTEIEMVLQINGKVRGSVTVPADADRAAIETAAAASETVAKFAEGKAPKKIVVVPGRLVNVVL</sequence>
<protein>
    <recommendedName>
        <fullName evidence="1">Leucine--tRNA ligase</fullName>
        <ecNumber evidence="1">6.1.1.4</ecNumber>
    </recommendedName>
    <alternativeName>
        <fullName evidence="1">Leucyl-tRNA synthetase</fullName>
        <shortName evidence="1">LeuRS</shortName>
    </alternativeName>
</protein>
<name>SYL_CUPPJ</name>
<evidence type="ECO:0000255" key="1">
    <source>
        <dbReference type="HAMAP-Rule" id="MF_00049"/>
    </source>
</evidence>
<evidence type="ECO:0000305" key="2"/>
<feature type="chain" id="PRO_0000334800" description="Leucine--tRNA ligase">
    <location>
        <begin position="1"/>
        <end position="873"/>
    </location>
</feature>
<feature type="short sequence motif" description="'HIGH' region">
    <location>
        <begin position="48"/>
        <end position="58"/>
    </location>
</feature>
<feature type="short sequence motif" description="'KMSKS' region">
    <location>
        <begin position="636"/>
        <end position="640"/>
    </location>
</feature>
<feature type="binding site" evidence="1">
    <location>
        <position position="639"/>
    </location>
    <ligand>
        <name>ATP</name>
        <dbReference type="ChEBI" id="CHEBI:30616"/>
    </ligand>
</feature>
<dbReference type="EC" id="6.1.1.4" evidence="1"/>
<dbReference type="EMBL" id="CP000090">
    <property type="protein sequence ID" value="AAZ62195.1"/>
    <property type="status" value="ALT_INIT"/>
    <property type="molecule type" value="Genomic_DNA"/>
</dbReference>
<dbReference type="SMR" id="Q46XD8"/>
<dbReference type="STRING" id="264198.Reut_A2834"/>
<dbReference type="KEGG" id="reu:Reut_A2834"/>
<dbReference type="eggNOG" id="COG0495">
    <property type="taxonomic scope" value="Bacteria"/>
</dbReference>
<dbReference type="HOGENOM" id="CLU_004427_0_0_4"/>
<dbReference type="OrthoDB" id="9810365at2"/>
<dbReference type="GO" id="GO:0005829">
    <property type="term" value="C:cytosol"/>
    <property type="evidence" value="ECO:0007669"/>
    <property type="project" value="TreeGrafter"/>
</dbReference>
<dbReference type="GO" id="GO:0002161">
    <property type="term" value="F:aminoacyl-tRNA deacylase activity"/>
    <property type="evidence" value="ECO:0007669"/>
    <property type="project" value="InterPro"/>
</dbReference>
<dbReference type="GO" id="GO:0005524">
    <property type="term" value="F:ATP binding"/>
    <property type="evidence" value="ECO:0007669"/>
    <property type="project" value="UniProtKB-UniRule"/>
</dbReference>
<dbReference type="GO" id="GO:0004823">
    <property type="term" value="F:leucine-tRNA ligase activity"/>
    <property type="evidence" value="ECO:0007669"/>
    <property type="project" value="UniProtKB-UniRule"/>
</dbReference>
<dbReference type="GO" id="GO:0006429">
    <property type="term" value="P:leucyl-tRNA aminoacylation"/>
    <property type="evidence" value="ECO:0007669"/>
    <property type="project" value="UniProtKB-UniRule"/>
</dbReference>
<dbReference type="CDD" id="cd07958">
    <property type="entry name" value="Anticodon_Ia_Leu_BEm"/>
    <property type="match status" value="1"/>
</dbReference>
<dbReference type="CDD" id="cd00812">
    <property type="entry name" value="LeuRS_core"/>
    <property type="match status" value="1"/>
</dbReference>
<dbReference type="FunFam" id="1.10.730.10:FF:000002">
    <property type="entry name" value="Leucine--tRNA ligase"/>
    <property type="match status" value="1"/>
</dbReference>
<dbReference type="FunFam" id="2.20.28.290:FF:000001">
    <property type="entry name" value="Leucine--tRNA ligase"/>
    <property type="match status" value="1"/>
</dbReference>
<dbReference type="FunFam" id="3.40.50.620:FF:000003">
    <property type="entry name" value="Leucine--tRNA ligase"/>
    <property type="match status" value="1"/>
</dbReference>
<dbReference type="FunFam" id="3.40.50.620:FF:000056">
    <property type="entry name" value="Leucine--tRNA ligase"/>
    <property type="match status" value="1"/>
</dbReference>
<dbReference type="FunFam" id="3.90.740.10:FF:000012">
    <property type="entry name" value="Leucine--tRNA ligase"/>
    <property type="match status" value="1"/>
</dbReference>
<dbReference type="Gene3D" id="2.20.28.290">
    <property type="match status" value="1"/>
</dbReference>
<dbReference type="Gene3D" id="3.10.20.590">
    <property type="match status" value="1"/>
</dbReference>
<dbReference type="Gene3D" id="3.40.50.620">
    <property type="entry name" value="HUPs"/>
    <property type="match status" value="2"/>
</dbReference>
<dbReference type="Gene3D" id="1.10.730.10">
    <property type="entry name" value="Isoleucyl-tRNA Synthetase, Domain 1"/>
    <property type="match status" value="1"/>
</dbReference>
<dbReference type="Gene3D" id="3.90.740.10">
    <property type="entry name" value="Valyl/Leucyl/Isoleucyl-tRNA synthetase, editing domain"/>
    <property type="match status" value="1"/>
</dbReference>
<dbReference type="HAMAP" id="MF_00049_B">
    <property type="entry name" value="Leu_tRNA_synth_B"/>
    <property type="match status" value="1"/>
</dbReference>
<dbReference type="InterPro" id="IPR001412">
    <property type="entry name" value="aa-tRNA-synth_I_CS"/>
</dbReference>
<dbReference type="InterPro" id="IPR002300">
    <property type="entry name" value="aa-tRNA-synth_Ia"/>
</dbReference>
<dbReference type="InterPro" id="IPR002302">
    <property type="entry name" value="Leu-tRNA-ligase"/>
</dbReference>
<dbReference type="InterPro" id="IPR025709">
    <property type="entry name" value="Leu_tRNA-synth_edit"/>
</dbReference>
<dbReference type="InterPro" id="IPR013155">
    <property type="entry name" value="M/V/L/I-tRNA-synth_anticd-bd"/>
</dbReference>
<dbReference type="InterPro" id="IPR014729">
    <property type="entry name" value="Rossmann-like_a/b/a_fold"/>
</dbReference>
<dbReference type="InterPro" id="IPR009080">
    <property type="entry name" value="tRNAsynth_Ia_anticodon-bd"/>
</dbReference>
<dbReference type="InterPro" id="IPR009008">
    <property type="entry name" value="Val/Leu/Ile-tRNA-synth_edit"/>
</dbReference>
<dbReference type="NCBIfam" id="TIGR00396">
    <property type="entry name" value="leuS_bact"/>
    <property type="match status" value="1"/>
</dbReference>
<dbReference type="PANTHER" id="PTHR43740:SF2">
    <property type="entry name" value="LEUCINE--TRNA LIGASE, MITOCHONDRIAL"/>
    <property type="match status" value="1"/>
</dbReference>
<dbReference type="PANTHER" id="PTHR43740">
    <property type="entry name" value="LEUCYL-TRNA SYNTHETASE"/>
    <property type="match status" value="1"/>
</dbReference>
<dbReference type="Pfam" id="PF08264">
    <property type="entry name" value="Anticodon_1"/>
    <property type="match status" value="1"/>
</dbReference>
<dbReference type="Pfam" id="PF00133">
    <property type="entry name" value="tRNA-synt_1"/>
    <property type="match status" value="3"/>
</dbReference>
<dbReference type="Pfam" id="PF13603">
    <property type="entry name" value="tRNA-synt_1_2"/>
    <property type="match status" value="1"/>
</dbReference>
<dbReference type="PRINTS" id="PR00985">
    <property type="entry name" value="TRNASYNTHLEU"/>
</dbReference>
<dbReference type="SUPFAM" id="SSF47323">
    <property type="entry name" value="Anticodon-binding domain of a subclass of class I aminoacyl-tRNA synthetases"/>
    <property type="match status" value="1"/>
</dbReference>
<dbReference type="SUPFAM" id="SSF52374">
    <property type="entry name" value="Nucleotidylyl transferase"/>
    <property type="match status" value="1"/>
</dbReference>
<dbReference type="SUPFAM" id="SSF50677">
    <property type="entry name" value="ValRS/IleRS/LeuRS editing domain"/>
    <property type="match status" value="1"/>
</dbReference>
<dbReference type="PROSITE" id="PS00178">
    <property type="entry name" value="AA_TRNA_LIGASE_I"/>
    <property type="match status" value="1"/>
</dbReference>